<dbReference type="EMBL" id="AF280057">
    <property type="protein sequence ID" value="AAG35778.1"/>
    <property type="molecule type" value="mRNA"/>
</dbReference>
<dbReference type="EMBL" id="AF290025">
    <property type="protein sequence ID" value="AAG35792.1"/>
    <property type="molecule type" value="Genomic_DNA"/>
</dbReference>
<dbReference type="EMBL" id="AC069328">
    <property type="status" value="NOT_ANNOTATED_CDS"/>
    <property type="molecule type" value="Genomic_DNA"/>
</dbReference>
<dbReference type="EMBL" id="CP002688">
    <property type="protein sequence ID" value="AED92581.1"/>
    <property type="molecule type" value="Genomic_DNA"/>
</dbReference>
<dbReference type="EMBL" id="AF360316">
    <property type="protein sequence ID" value="AAK26026.1"/>
    <property type="molecule type" value="mRNA"/>
</dbReference>
<dbReference type="EMBL" id="AY113888">
    <property type="protein sequence ID" value="AAM44936.1"/>
    <property type="molecule type" value="mRNA"/>
</dbReference>
<dbReference type="RefSeq" id="NP_568364.1">
    <property type="nucleotide sequence ID" value="NM_121863.4"/>
</dbReference>
<dbReference type="SMR" id="Q9FEE2"/>
<dbReference type="BioGRID" id="17252">
    <property type="interactions" value="11"/>
</dbReference>
<dbReference type="FunCoup" id="Q9FEE2">
    <property type="interactions" value="4022"/>
</dbReference>
<dbReference type="IntAct" id="Q9FEE2">
    <property type="interactions" value="9"/>
</dbReference>
<dbReference type="STRING" id="3702.Q9FEE2"/>
<dbReference type="iPTMnet" id="Q9FEE2"/>
<dbReference type="PaxDb" id="3702-AT5G18580.1"/>
<dbReference type="ProteomicsDB" id="234324"/>
<dbReference type="EnsemblPlants" id="AT5G18580.1">
    <property type="protein sequence ID" value="AT5G18580.1"/>
    <property type="gene ID" value="AT5G18580"/>
</dbReference>
<dbReference type="GeneID" id="831976"/>
<dbReference type="Gramene" id="AT5G18580.1">
    <property type="protein sequence ID" value="AT5G18580.1"/>
    <property type="gene ID" value="AT5G18580"/>
</dbReference>
<dbReference type="KEGG" id="ath:AT5G18580"/>
<dbReference type="Araport" id="AT5G18580"/>
<dbReference type="TAIR" id="AT5G18580">
    <property type="gene designation" value="FASS"/>
</dbReference>
<dbReference type="eggNOG" id="KOG2562">
    <property type="taxonomic scope" value="Eukaryota"/>
</dbReference>
<dbReference type="HOGENOM" id="CLU_035365_2_0_1"/>
<dbReference type="InParanoid" id="Q9FEE2"/>
<dbReference type="OMA" id="HKFWAYE"/>
<dbReference type="PhylomeDB" id="Q9FEE2"/>
<dbReference type="PRO" id="PR:Q9FEE2"/>
<dbReference type="Proteomes" id="UP000006548">
    <property type="component" value="Chromosome 5"/>
</dbReference>
<dbReference type="ExpressionAtlas" id="Q9FEE2">
    <property type="expression patterns" value="baseline and differential"/>
</dbReference>
<dbReference type="GO" id="GO:0005737">
    <property type="term" value="C:cytoplasm"/>
    <property type="evidence" value="ECO:0007005"/>
    <property type="project" value="TAIR"/>
</dbReference>
<dbReference type="GO" id="GO:0005634">
    <property type="term" value="C:nucleus"/>
    <property type="evidence" value="ECO:0007005"/>
    <property type="project" value="TAIR"/>
</dbReference>
<dbReference type="GO" id="GO:0009524">
    <property type="term" value="C:phragmoplast"/>
    <property type="evidence" value="ECO:0007005"/>
    <property type="project" value="TAIR"/>
</dbReference>
<dbReference type="GO" id="GO:0005819">
    <property type="term" value="C:spindle"/>
    <property type="evidence" value="ECO:0007005"/>
    <property type="project" value="TAIR"/>
</dbReference>
<dbReference type="GO" id="GO:0005509">
    <property type="term" value="F:calcium ion binding"/>
    <property type="evidence" value="ECO:0007669"/>
    <property type="project" value="InterPro"/>
</dbReference>
<dbReference type="GO" id="GO:0030865">
    <property type="term" value="P:cortical cytoskeleton organization"/>
    <property type="evidence" value="ECO:0000315"/>
    <property type="project" value="UniProtKB"/>
</dbReference>
<dbReference type="GO" id="GO:0000226">
    <property type="term" value="P:microtubule cytoskeleton organization"/>
    <property type="evidence" value="ECO:0000315"/>
    <property type="project" value="UniProtKB"/>
</dbReference>
<dbReference type="GO" id="GO:0000913">
    <property type="term" value="P:preprophase band assembly"/>
    <property type="evidence" value="ECO:0000315"/>
    <property type="project" value="UniProtKB"/>
</dbReference>
<dbReference type="GO" id="GO:0035303">
    <property type="term" value="P:regulation of dephosphorylation"/>
    <property type="evidence" value="ECO:0007669"/>
    <property type="project" value="InterPro"/>
</dbReference>
<dbReference type="GO" id="GO:0009826">
    <property type="term" value="P:unidimensional cell growth"/>
    <property type="evidence" value="ECO:0000304"/>
    <property type="project" value="TAIR"/>
</dbReference>
<dbReference type="CDD" id="cd21505">
    <property type="entry name" value="PPP2R3C"/>
    <property type="match status" value="1"/>
</dbReference>
<dbReference type="FunFam" id="1.10.238.10:FF:000129">
    <property type="entry name" value="Serine/threonine-protein phosphatase 2A regulatory subunit B'' subunit gamma"/>
    <property type="match status" value="1"/>
</dbReference>
<dbReference type="Gene3D" id="1.10.238.10">
    <property type="entry name" value="EF-hand"/>
    <property type="match status" value="1"/>
</dbReference>
<dbReference type="InterPro" id="IPR011992">
    <property type="entry name" value="EF-hand-dom_pair"/>
</dbReference>
<dbReference type="InterPro" id="IPR018247">
    <property type="entry name" value="EF_Hand_1_Ca_BS"/>
</dbReference>
<dbReference type="InterPro" id="IPR002048">
    <property type="entry name" value="EF_hand_dom"/>
</dbReference>
<dbReference type="InterPro" id="IPR039865">
    <property type="entry name" value="PPP2R3C"/>
</dbReference>
<dbReference type="PANTHER" id="PTHR12085">
    <property type="entry name" value="SERINE/THREONINE-PROTEIN PHOSPHATASE 2A REGULATORY SUBUNIT B'' SUBUNIT GAMMA"/>
    <property type="match status" value="1"/>
</dbReference>
<dbReference type="PANTHER" id="PTHR12085:SF3">
    <property type="entry name" value="SERINE_THREONINE-PROTEIN PHOSPHATASE 2A REGULATORY SUBUNIT B'' SUBUNIT GAMMA"/>
    <property type="match status" value="1"/>
</dbReference>
<dbReference type="SUPFAM" id="SSF47473">
    <property type="entry name" value="EF-hand"/>
    <property type="match status" value="2"/>
</dbReference>
<dbReference type="PROSITE" id="PS00018">
    <property type="entry name" value="EF_HAND_1"/>
    <property type="match status" value="1"/>
</dbReference>
<dbReference type="PROSITE" id="PS50222">
    <property type="entry name" value="EF_HAND_2"/>
    <property type="match status" value="3"/>
</dbReference>
<organism>
    <name type="scientific">Arabidopsis thaliana</name>
    <name type="common">Mouse-ear cress</name>
    <dbReference type="NCBI Taxonomy" id="3702"/>
    <lineage>
        <taxon>Eukaryota</taxon>
        <taxon>Viridiplantae</taxon>
        <taxon>Streptophyta</taxon>
        <taxon>Embryophyta</taxon>
        <taxon>Tracheophyta</taxon>
        <taxon>Spermatophyta</taxon>
        <taxon>Magnoliopsida</taxon>
        <taxon>eudicotyledons</taxon>
        <taxon>Gunneridae</taxon>
        <taxon>Pentapetalae</taxon>
        <taxon>rosids</taxon>
        <taxon>malvids</taxon>
        <taxon>Brassicales</taxon>
        <taxon>Brassicaceae</taxon>
        <taxon>Camelineae</taxon>
        <taxon>Arabidopsis</taxon>
    </lineage>
</organism>
<feature type="chain" id="PRO_0000420915" description="Probable serine/threonine-protein phosphatase 2A regulatory subunit B'' subunit TON2">
    <location>
        <begin position="1"/>
        <end position="480"/>
    </location>
</feature>
<feature type="domain" description="EF-hand 1" evidence="1">
    <location>
        <begin position="186"/>
        <end position="221"/>
    </location>
</feature>
<feature type="domain" description="EF-hand 2" evidence="1">
    <location>
        <begin position="294"/>
        <end position="329"/>
    </location>
</feature>
<feature type="domain" description="EF-hand 3" evidence="1">
    <location>
        <begin position="369"/>
        <end position="404"/>
    </location>
</feature>
<feature type="binding site" evidence="1">
    <location>
        <position position="307"/>
    </location>
    <ligand>
        <name>Ca(2+)</name>
        <dbReference type="ChEBI" id="CHEBI:29108"/>
    </ligand>
</feature>
<feature type="binding site" evidence="1">
    <location>
        <position position="309"/>
    </location>
    <ligand>
        <name>Ca(2+)</name>
        <dbReference type="ChEBI" id="CHEBI:29108"/>
    </ligand>
</feature>
<feature type="binding site" evidence="1">
    <location>
        <position position="311"/>
    </location>
    <ligand>
        <name>Ca(2+)</name>
        <dbReference type="ChEBI" id="CHEBI:29108"/>
    </ligand>
</feature>
<feature type="binding site" evidence="1">
    <location>
        <position position="313"/>
    </location>
    <ligand>
        <name>Ca(2+)</name>
        <dbReference type="ChEBI" id="CHEBI:29108"/>
    </ligand>
</feature>
<feature type="binding site" evidence="1">
    <location>
        <position position="318"/>
    </location>
    <ligand>
        <name>Ca(2+)</name>
        <dbReference type="ChEBI" id="CHEBI:29108"/>
    </ligand>
</feature>
<evidence type="ECO:0000255" key="1">
    <source>
        <dbReference type="PROSITE-ProRule" id="PRU00448"/>
    </source>
</evidence>
<evidence type="ECO:0000269" key="2">
    <source>
    </source>
</evidence>
<evidence type="ECO:0000269" key="3">
    <source>
    </source>
</evidence>
<keyword id="KW-0106">Calcium</keyword>
<keyword id="KW-0963">Cytoplasm</keyword>
<keyword id="KW-0206">Cytoskeleton</keyword>
<keyword id="KW-0479">Metal-binding</keyword>
<keyword id="KW-1185">Reference proteome</keyword>
<keyword id="KW-0677">Repeat</keyword>
<gene>
    <name type="primary">TON2</name>
    <name type="synonym">EMB40</name>
    <name type="synonym">FASS</name>
    <name type="synonym">FASS1</name>
    <name type="synonym">FASS2</name>
    <name type="synonym">FS1</name>
    <name type="synonym">GDO</name>
    <name type="ordered locus">At5g18580</name>
    <name type="ORF">T28N17</name>
</gene>
<accession>Q9FEE2</accession>
<protein>
    <recommendedName>
        <fullName>Probable serine/threonine-protein phosphatase 2A regulatory subunit B'' subunit TON2</fullName>
    </recommendedName>
    <alternativeName>
        <fullName>Protein EMBRYO DEFFECTIVE 40</fullName>
    </alternativeName>
    <alternativeName>
        <fullName>Protein GORDO</fullName>
    </alternativeName>
    <alternativeName>
        <fullName>Protein TONNEAU 2</fullName>
    </alternativeName>
</protein>
<sequence length="480" mass="55070">MYSGSSDGESHDTSTQRKIPPASSMLWVRNLRRYIGSGAGLGSEALMELETKRILLEIFKEKQQKSQEAGTIPSFYKKKPEEGSISQRVQKLAKYRFLKKQSDLLLNADDLAAMWVCLRENCVIDDATGAEKMNYEDFCHIASVCTEQIGPKCRRFFSPSNFMKFEKDEAGRIAILPFYLYVMRTVSLTQARIDMSELDEDSDGFLHSDEMESYIGGLIPNLAQLRDMPPAFNQMYCRIASQKFFFFCDPHRRGRACIKKILLSNCLQELMELHQESEEEVTDTEQAENWFSLTSAQRICDMFLALDKDMSGSLCKQELKEYADGTLTEIFIERVFDEHVRRGKIVAGNSREMDFDSFLDFVLALENKDTPEGLTYLFRCLDLQGRGFLTTADIHSLFRDVHQKWIEGGNYELCIEDVRDEIWDMVKPSDPLKITLGDLLGCKQGGTVASMLIDVRGFWAHDNRENLLQEEEEPPEEESQ</sequence>
<comment type="function">
    <text evidence="2 3">Probable regulatory subunit of type 2A protein phosphatase involved in the control of the dynamic organization of the cortical cytoskeleton. Plays an important role in the organization of interphase microtubule arrays in part through the regulation of nucleation geometry. Required for the reorganization of cortical arrays in response to light.</text>
</comment>
<comment type="subunit">
    <text evidence="2">Interacts with PP2AA1.</text>
</comment>
<comment type="interaction">
    <interactant intactId="EBI-4452426">
        <id>Q9FEE2</id>
    </interactant>
    <interactant intactId="EBI-25511057">
        <id>A0A384L363</id>
        <label>At3g18240</label>
    </interactant>
    <organismsDiffer>false</organismsDiffer>
    <experiments>4</experiments>
</comment>
<comment type="interaction">
    <interactant intactId="EBI-4452426">
        <id>Q9FEE2</id>
    </interactant>
    <interactant intactId="EBI-2460434">
        <id>Q9LRH6</id>
        <label>GATA25</label>
    </interactant>
    <organismsDiffer>false</organismsDiffer>
    <experiments>3</experiments>
</comment>
<comment type="interaction">
    <interactant intactId="EBI-4452426">
        <id>Q9FEE2</id>
    </interactant>
    <interactant intactId="EBI-4435064">
        <id>Q8H1G0</id>
        <label>GATA28</label>
    </interactant>
    <organismsDiffer>false</organismsDiffer>
    <experiments>3</experiments>
</comment>
<comment type="interaction">
    <interactant intactId="EBI-4452426">
        <id>Q9FEE2</id>
    </interactant>
    <interactant intactId="EBI-617608">
        <id>Q38830</id>
        <label>IAA12</label>
    </interactant>
    <organismsDiffer>false</organismsDiffer>
    <experiments>3</experiments>
</comment>
<comment type="interaction">
    <interactant intactId="EBI-4452426">
        <id>Q9FEE2</id>
    </interactant>
    <interactant intactId="EBI-3133404">
        <id>Q9XFM0</id>
        <label>IAA28</label>
    </interactant>
    <organismsDiffer>false</organismsDiffer>
    <experiments>3</experiments>
</comment>
<comment type="interaction">
    <interactant intactId="EBI-4452426">
        <id>Q9FEE2</id>
    </interactant>
    <interactant intactId="EBI-1546246">
        <id>Q9FNV9</id>
        <label>MYB113</label>
    </interactant>
    <organismsDiffer>false</organismsDiffer>
    <experiments>3</experiments>
</comment>
<comment type="subcellular location">
    <subcellularLocation>
        <location evidence="3">Cytoplasm</location>
    </subcellularLocation>
    <subcellularLocation>
        <location evidence="3">Cytoplasm</location>
        <location evidence="3">Cytoskeleton</location>
    </subcellularLocation>
    <text>Predominantly cytoplasmic, but at the late G2 phase localizes at the cortical region corresponding to the preprophase band.</text>
</comment>
<comment type="tissue specificity">
    <text evidence="2">Widely expressed.</text>
</comment>
<comment type="disruption phenotype">
    <text evidence="2">Extreme phenotype with disrupted cell elongation and a highly compressed apical-basal axis due to disorganization of the interphase microtubule array and lack of the preprophase band before mitosis. Sterile flowers.</text>
</comment>
<name>TON2_ARATH</name>
<reference key="1">
    <citation type="journal article" date="2002" name="Plant Cell">
        <title>The Arabidopsis TONNEAU2 gene encodes a putative novel protein phosphatase 2A regulatory subunit essential for the control of the cortical cytoskeleton.</title>
        <authorList>
            <person name="Camilleri C."/>
            <person name="Azimzadeh J."/>
            <person name="Pastuglia M."/>
            <person name="Bellini C."/>
            <person name="Grandjean O."/>
            <person name="Bouchez D."/>
        </authorList>
    </citation>
    <scope>NUCLEOTIDE SEQUENCE [GENOMIC DNA / MRNA]</scope>
    <scope>FUNCTION</scope>
    <scope>INTERACTION WITH PP2AA1</scope>
    <scope>TISSUE SPECIFICITY</scope>
    <scope>DISRUPTION PHENOTYPE</scope>
    <source>
        <strain>cv. Columbia</strain>
    </source>
</reference>
<reference key="2">
    <citation type="journal article" date="2000" name="Nature">
        <title>Sequence and analysis of chromosome 5 of the plant Arabidopsis thaliana.</title>
        <authorList>
            <person name="Tabata S."/>
            <person name="Kaneko T."/>
            <person name="Nakamura Y."/>
            <person name="Kotani H."/>
            <person name="Kato T."/>
            <person name="Asamizu E."/>
            <person name="Miyajima N."/>
            <person name="Sasamoto S."/>
            <person name="Kimura T."/>
            <person name="Hosouchi T."/>
            <person name="Kawashima K."/>
            <person name="Kohara M."/>
            <person name="Matsumoto M."/>
            <person name="Matsuno A."/>
            <person name="Muraki A."/>
            <person name="Nakayama S."/>
            <person name="Nakazaki N."/>
            <person name="Naruo K."/>
            <person name="Okumura S."/>
            <person name="Shinpo S."/>
            <person name="Takeuchi C."/>
            <person name="Wada T."/>
            <person name="Watanabe A."/>
            <person name="Yamada M."/>
            <person name="Yasuda M."/>
            <person name="Sato S."/>
            <person name="de la Bastide M."/>
            <person name="Huang E."/>
            <person name="Spiegel L."/>
            <person name="Gnoj L."/>
            <person name="O'Shaughnessy A."/>
            <person name="Preston R."/>
            <person name="Habermann K."/>
            <person name="Murray J."/>
            <person name="Johnson D."/>
            <person name="Rohlfing T."/>
            <person name="Nelson J."/>
            <person name="Stoneking T."/>
            <person name="Pepin K."/>
            <person name="Spieth J."/>
            <person name="Sekhon M."/>
            <person name="Armstrong J."/>
            <person name="Becker M."/>
            <person name="Belter E."/>
            <person name="Cordum H."/>
            <person name="Cordes M."/>
            <person name="Courtney L."/>
            <person name="Courtney W."/>
            <person name="Dante M."/>
            <person name="Du H."/>
            <person name="Edwards J."/>
            <person name="Fryman J."/>
            <person name="Haakensen B."/>
            <person name="Lamar E."/>
            <person name="Latreille P."/>
            <person name="Leonard S."/>
            <person name="Meyer R."/>
            <person name="Mulvaney E."/>
            <person name="Ozersky P."/>
            <person name="Riley A."/>
            <person name="Strowmatt C."/>
            <person name="Wagner-McPherson C."/>
            <person name="Wollam A."/>
            <person name="Yoakum M."/>
            <person name="Bell M."/>
            <person name="Dedhia N."/>
            <person name="Parnell L."/>
            <person name="Shah R."/>
            <person name="Rodriguez M."/>
            <person name="Hoon See L."/>
            <person name="Vil D."/>
            <person name="Baker J."/>
            <person name="Kirchoff K."/>
            <person name="Toth K."/>
            <person name="King L."/>
            <person name="Bahret A."/>
            <person name="Miller B."/>
            <person name="Marra M.A."/>
            <person name="Martienssen R."/>
            <person name="McCombie W.R."/>
            <person name="Wilson R.K."/>
            <person name="Murphy G."/>
            <person name="Bancroft I."/>
            <person name="Volckaert G."/>
            <person name="Wambutt R."/>
            <person name="Duesterhoeft A."/>
            <person name="Stiekema W."/>
            <person name="Pohl T."/>
            <person name="Entian K.-D."/>
            <person name="Terryn N."/>
            <person name="Hartley N."/>
            <person name="Bent E."/>
            <person name="Johnson S."/>
            <person name="Langham S.-A."/>
            <person name="McCullagh B."/>
            <person name="Robben J."/>
            <person name="Grymonprez B."/>
            <person name="Zimmermann W."/>
            <person name="Ramsperger U."/>
            <person name="Wedler H."/>
            <person name="Balke K."/>
            <person name="Wedler E."/>
            <person name="Peters S."/>
            <person name="van Staveren M."/>
            <person name="Dirkse W."/>
            <person name="Mooijman P."/>
            <person name="Klein Lankhorst R."/>
            <person name="Weitzenegger T."/>
            <person name="Bothe G."/>
            <person name="Rose M."/>
            <person name="Hauf J."/>
            <person name="Berneiser S."/>
            <person name="Hempel S."/>
            <person name="Feldpausch M."/>
            <person name="Lamberth S."/>
            <person name="Villarroel R."/>
            <person name="Gielen J."/>
            <person name="Ardiles W."/>
            <person name="Bents O."/>
            <person name="Lemcke K."/>
            <person name="Kolesov G."/>
            <person name="Mayer K.F.X."/>
            <person name="Rudd S."/>
            <person name="Schoof H."/>
            <person name="Schueller C."/>
            <person name="Zaccaria P."/>
            <person name="Mewes H.-W."/>
            <person name="Bevan M."/>
            <person name="Fransz P.F."/>
        </authorList>
    </citation>
    <scope>NUCLEOTIDE SEQUENCE [LARGE SCALE GENOMIC DNA]</scope>
    <source>
        <strain>cv. Columbia</strain>
    </source>
</reference>
<reference key="3">
    <citation type="journal article" date="2017" name="Plant J.">
        <title>Araport11: a complete reannotation of the Arabidopsis thaliana reference genome.</title>
        <authorList>
            <person name="Cheng C.Y."/>
            <person name="Krishnakumar V."/>
            <person name="Chan A.P."/>
            <person name="Thibaud-Nissen F."/>
            <person name="Schobel S."/>
            <person name="Town C.D."/>
        </authorList>
    </citation>
    <scope>GENOME REANNOTATION</scope>
    <source>
        <strain>cv. Columbia</strain>
    </source>
</reference>
<reference key="4">
    <citation type="journal article" date="2003" name="Science">
        <title>Empirical analysis of transcriptional activity in the Arabidopsis genome.</title>
        <authorList>
            <person name="Yamada K."/>
            <person name="Lim J."/>
            <person name="Dale J.M."/>
            <person name="Chen H."/>
            <person name="Shinn P."/>
            <person name="Palm C.J."/>
            <person name="Southwick A.M."/>
            <person name="Wu H.C."/>
            <person name="Kim C.J."/>
            <person name="Nguyen M."/>
            <person name="Pham P.K."/>
            <person name="Cheuk R.F."/>
            <person name="Karlin-Newmann G."/>
            <person name="Liu S.X."/>
            <person name="Lam B."/>
            <person name="Sakano H."/>
            <person name="Wu T."/>
            <person name="Yu G."/>
            <person name="Miranda M."/>
            <person name="Quach H.L."/>
            <person name="Tripp M."/>
            <person name="Chang C.H."/>
            <person name="Lee J.M."/>
            <person name="Toriumi M.J."/>
            <person name="Chan M.M."/>
            <person name="Tang C.C."/>
            <person name="Onodera C.S."/>
            <person name="Deng J.M."/>
            <person name="Akiyama K."/>
            <person name="Ansari Y."/>
            <person name="Arakawa T."/>
            <person name="Banh J."/>
            <person name="Banno F."/>
            <person name="Bowser L."/>
            <person name="Brooks S.Y."/>
            <person name="Carninci P."/>
            <person name="Chao Q."/>
            <person name="Choy N."/>
            <person name="Enju A."/>
            <person name="Goldsmith A.D."/>
            <person name="Gurjal M."/>
            <person name="Hansen N.F."/>
            <person name="Hayashizaki Y."/>
            <person name="Johnson-Hopson C."/>
            <person name="Hsuan V.W."/>
            <person name="Iida K."/>
            <person name="Karnes M."/>
            <person name="Khan S."/>
            <person name="Koesema E."/>
            <person name="Ishida J."/>
            <person name="Jiang P.X."/>
            <person name="Jones T."/>
            <person name="Kawai J."/>
            <person name="Kamiya A."/>
            <person name="Meyers C."/>
            <person name="Nakajima M."/>
            <person name="Narusaka M."/>
            <person name="Seki M."/>
            <person name="Sakurai T."/>
            <person name="Satou M."/>
            <person name="Tamse R."/>
            <person name="Vaysberg M."/>
            <person name="Wallender E.K."/>
            <person name="Wong C."/>
            <person name="Yamamura Y."/>
            <person name="Yuan S."/>
            <person name="Shinozaki K."/>
            <person name="Davis R.W."/>
            <person name="Theologis A."/>
            <person name="Ecker J.R."/>
        </authorList>
    </citation>
    <scope>NUCLEOTIDE SEQUENCE [LARGE SCALE MRNA]</scope>
    <source>
        <strain>cv. Columbia</strain>
    </source>
</reference>
<reference key="5">
    <citation type="journal article" date="2012" name="Plant Cell">
        <title>TONNEAU2/FASS regulates the geometry of microtubule nucleation and cortical array organization in interphase Arabidopsis cells.</title>
        <authorList>
            <person name="Kirik A."/>
            <person name="Ehrhardt D.W."/>
            <person name="Kirik V."/>
        </authorList>
    </citation>
    <scope>FUNCTION</scope>
    <scope>SUBCELLULAR LOCATION</scope>
</reference>
<proteinExistence type="evidence at protein level"/>